<proteinExistence type="inferred from homology"/>
<reference key="1">
    <citation type="journal article" date="2008" name="Genome Res.">
        <title>Comparative genome analysis of Salmonella enteritidis PT4 and Salmonella gallinarum 287/91 provides insights into evolutionary and host adaptation pathways.</title>
        <authorList>
            <person name="Thomson N.R."/>
            <person name="Clayton D.J."/>
            <person name="Windhorst D."/>
            <person name="Vernikos G."/>
            <person name="Davidson S."/>
            <person name="Churcher C."/>
            <person name="Quail M.A."/>
            <person name="Stevens M."/>
            <person name="Jones M.A."/>
            <person name="Watson M."/>
            <person name="Barron A."/>
            <person name="Layton A."/>
            <person name="Pickard D."/>
            <person name="Kingsley R.A."/>
            <person name="Bignell A."/>
            <person name="Clark L."/>
            <person name="Harris B."/>
            <person name="Ormond D."/>
            <person name="Abdellah Z."/>
            <person name="Brooks K."/>
            <person name="Cherevach I."/>
            <person name="Chillingworth T."/>
            <person name="Woodward J."/>
            <person name="Norberczak H."/>
            <person name="Lord A."/>
            <person name="Arrowsmith C."/>
            <person name="Jagels K."/>
            <person name="Moule S."/>
            <person name="Mungall K."/>
            <person name="Saunders M."/>
            <person name="Whitehead S."/>
            <person name="Chabalgoity J.A."/>
            <person name="Maskell D."/>
            <person name="Humphreys T."/>
            <person name="Roberts M."/>
            <person name="Barrow P.A."/>
            <person name="Dougan G."/>
            <person name="Parkhill J."/>
        </authorList>
    </citation>
    <scope>NUCLEOTIDE SEQUENCE [LARGE SCALE GENOMIC DNA]</scope>
    <source>
        <strain>P125109</strain>
    </source>
</reference>
<name>PIMT_SALEP</name>
<comment type="function">
    <text evidence="1">Catalyzes the methyl esterification of L-isoaspartyl residues in peptides and proteins that result from spontaneous decomposition of normal L-aspartyl and L-asparaginyl residues. It plays a role in the repair and/or degradation of damaged proteins.</text>
</comment>
<comment type="catalytic activity">
    <reaction evidence="1">
        <text>[protein]-L-isoaspartate + S-adenosyl-L-methionine = [protein]-L-isoaspartate alpha-methyl ester + S-adenosyl-L-homocysteine</text>
        <dbReference type="Rhea" id="RHEA:12705"/>
        <dbReference type="Rhea" id="RHEA-COMP:12143"/>
        <dbReference type="Rhea" id="RHEA-COMP:12144"/>
        <dbReference type="ChEBI" id="CHEBI:57856"/>
        <dbReference type="ChEBI" id="CHEBI:59789"/>
        <dbReference type="ChEBI" id="CHEBI:90596"/>
        <dbReference type="ChEBI" id="CHEBI:90598"/>
        <dbReference type="EC" id="2.1.1.77"/>
    </reaction>
</comment>
<comment type="subcellular location">
    <subcellularLocation>
        <location evidence="1">Cytoplasm</location>
    </subcellularLocation>
</comment>
<comment type="similarity">
    <text evidence="1">Belongs to the methyltransferase superfamily. L-isoaspartyl/D-aspartyl protein methyltransferase family.</text>
</comment>
<gene>
    <name evidence="1" type="primary">pcm</name>
    <name type="ordered locus">SEN2765</name>
</gene>
<accession>B5QW14</accession>
<dbReference type="EC" id="2.1.1.77" evidence="1"/>
<dbReference type="EMBL" id="AM933172">
    <property type="protein sequence ID" value="CAR34344.1"/>
    <property type="molecule type" value="Genomic_DNA"/>
</dbReference>
<dbReference type="RefSeq" id="WP_000253545.1">
    <property type="nucleotide sequence ID" value="NC_011294.1"/>
</dbReference>
<dbReference type="SMR" id="B5QW14"/>
<dbReference type="KEGG" id="set:SEN2765"/>
<dbReference type="HOGENOM" id="CLU_055432_2_0_6"/>
<dbReference type="Proteomes" id="UP000000613">
    <property type="component" value="Chromosome"/>
</dbReference>
<dbReference type="GO" id="GO:0005737">
    <property type="term" value="C:cytoplasm"/>
    <property type="evidence" value="ECO:0007669"/>
    <property type="project" value="UniProtKB-SubCell"/>
</dbReference>
<dbReference type="GO" id="GO:0004719">
    <property type="term" value="F:protein-L-isoaspartate (D-aspartate) O-methyltransferase activity"/>
    <property type="evidence" value="ECO:0007669"/>
    <property type="project" value="UniProtKB-UniRule"/>
</dbReference>
<dbReference type="GO" id="GO:0032259">
    <property type="term" value="P:methylation"/>
    <property type="evidence" value="ECO:0007669"/>
    <property type="project" value="UniProtKB-KW"/>
</dbReference>
<dbReference type="GO" id="GO:0036211">
    <property type="term" value="P:protein modification process"/>
    <property type="evidence" value="ECO:0007669"/>
    <property type="project" value="UniProtKB-UniRule"/>
</dbReference>
<dbReference type="GO" id="GO:0030091">
    <property type="term" value="P:protein repair"/>
    <property type="evidence" value="ECO:0007669"/>
    <property type="project" value="UniProtKB-UniRule"/>
</dbReference>
<dbReference type="CDD" id="cd02440">
    <property type="entry name" value="AdoMet_MTases"/>
    <property type="match status" value="1"/>
</dbReference>
<dbReference type="FunFam" id="3.40.50.150:FF:000010">
    <property type="entry name" value="Protein-L-isoaspartate O-methyltransferase"/>
    <property type="match status" value="1"/>
</dbReference>
<dbReference type="Gene3D" id="3.40.50.150">
    <property type="entry name" value="Vaccinia Virus protein VP39"/>
    <property type="match status" value="1"/>
</dbReference>
<dbReference type="HAMAP" id="MF_00090">
    <property type="entry name" value="PIMT"/>
    <property type="match status" value="1"/>
</dbReference>
<dbReference type="InterPro" id="IPR000682">
    <property type="entry name" value="PCMT"/>
</dbReference>
<dbReference type="InterPro" id="IPR029063">
    <property type="entry name" value="SAM-dependent_MTases_sf"/>
</dbReference>
<dbReference type="NCBIfam" id="TIGR00080">
    <property type="entry name" value="pimt"/>
    <property type="match status" value="1"/>
</dbReference>
<dbReference type="NCBIfam" id="NF001453">
    <property type="entry name" value="PRK00312.1"/>
    <property type="match status" value="1"/>
</dbReference>
<dbReference type="PANTHER" id="PTHR11579">
    <property type="entry name" value="PROTEIN-L-ISOASPARTATE O-METHYLTRANSFERASE"/>
    <property type="match status" value="1"/>
</dbReference>
<dbReference type="PANTHER" id="PTHR11579:SF0">
    <property type="entry name" value="PROTEIN-L-ISOASPARTATE(D-ASPARTATE) O-METHYLTRANSFERASE"/>
    <property type="match status" value="1"/>
</dbReference>
<dbReference type="Pfam" id="PF01135">
    <property type="entry name" value="PCMT"/>
    <property type="match status" value="1"/>
</dbReference>
<dbReference type="SUPFAM" id="SSF53335">
    <property type="entry name" value="S-adenosyl-L-methionine-dependent methyltransferases"/>
    <property type="match status" value="1"/>
</dbReference>
<dbReference type="PROSITE" id="PS01279">
    <property type="entry name" value="PCMT"/>
    <property type="match status" value="1"/>
</dbReference>
<sequence length="208" mass="23192">MVSGRVQALLEQLRAQGIRDEQVLNALAAVPREKFIDEAFEHKAWENIALPIGQGQTISQPYMVARMTELLELTPQSRVLEIGTGSGYQTAILAHLVHHVCSVERIKGLQWQARRRLKQLDLHNVSTRHGDGWQGWQARAPFDAIIVTAAPPEIPTALMAQLDEGGILVLPVGDEQQFLKRVRRRGGEFIIDTVEAVRFVPLVKGELA</sequence>
<feature type="chain" id="PRO_1000093273" description="Protein-L-isoaspartate O-methyltransferase">
    <location>
        <begin position="1"/>
        <end position="208"/>
    </location>
</feature>
<feature type="active site" evidence="1">
    <location>
        <position position="59"/>
    </location>
</feature>
<organism>
    <name type="scientific">Salmonella enteritidis PT4 (strain P125109)</name>
    <dbReference type="NCBI Taxonomy" id="550537"/>
    <lineage>
        <taxon>Bacteria</taxon>
        <taxon>Pseudomonadati</taxon>
        <taxon>Pseudomonadota</taxon>
        <taxon>Gammaproteobacteria</taxon>
        <taxon>Enterobacterales</taxon>
        <taxon>Enterobacteriaceae</taxon>
        <taxon>Salmonella</taxon>
    </lineage>
</organism>
<protein>
    <recommendedName>
        <fullName evidence="1">Protein-L-isoaspartate O-methyltransferase</fullName>
        <ecNumber evidence="1">2.1.1.77</ecNumber>
    </recommendedName>
    <alternativeName>
        <fullName evidence="1">L-isoaspartyl protein carboxyl methyltransferase</fullName>
    </alternativeName>
    <alternativeName>
        <fullName evidence="1">Protein L-isoaspartyl methyltransferase</fullName>
    </alternativeName>
    <alternativeName>
        <fullName evidence="1">Protein-beta-aspartate methyltransferase</fullName>
        <shortName evidence="1">PIMT</shortName>
    </alternativeName>
</protein>
<evidence type="ECO:0000255" key="1">
    <source>
        <dbReference type="HAMAP-Rule" id="MF_00090"/>
    </source>
</evidence>
<keyword id="KW-0963">Cytoplasm</keyword>
<keyword id="KW-0489">Methyltransferase</keyword>
<keyword id="KW-0949">S-adenosyl-L-methionine</keyword>
<keyword id="KW-0808">Transferase</keyword>